<accession>Q2YPI2</accession>
<name>PANC_BRUA2</name>
<protein>
    <recommendedName>
        <fullName evidence="1">Pantothenate synthetase</fullName>
        <shortName evidence="1">PS</shortName>
        <ecNumber evidence="1">6.3.2.1</ecNumber>
    </recommendedName>
    <alternativeName>
        <fullName evidence="1">Pantoate--beta-alanine ligase</fullName>
    </alternativeName>
    <alternativeName>
        <fullName evidence="1">Pantoate-activating enzyme</fullName>
    </alternativeName>
</protein>
<sequence>MQIIHTIEELRQALAPARQQGKKIGFVPTMGYLHKGHLELVRRARVENDVTLVSIFVNPLQFGANEDLGRYPRDLERDAGLLHDAQVDYLFAPTVSDMYPRPMQTVVDVPPLGNQIEGEARPGHFAGVATVVSKLFNIVGPDAAYFGEKDFQQLVIIRRMVDDMAIPVRIVGVETVREDDGLACSSRNVYLTPEQRRAAIIVPQALDEADRLYRSGMDDPDALEAAIRTFIGRQPLAVPEVIAIRDPETLERLPALQGRPILVALFVRVGATRLLDNRVIGHAAPQITQERAA</sequence>
<gene>
    <name evidence="1" type="primary">panC</name>
    <name type="ordered locus">BAB1_0359</name>
</gene>
<dbReference type="EC" id="6.3.2.1" evidence="1"/>
<dbReference type="EMBL" id="AM040264">
    <property type="protein sequence ID" value="CAJ10315.1"/>
    <property type="molecule type" value="Genomic_DNA"/>
</dbReference>
<dbReference type="RefSeq" id="WP_002963494.1">
    <property type="nucleotide sequence ID" value="NZ_KN046823.1"/>
</dbReference>
<dbReference type="SMR" id="Q2YPI2"/>
<dbReference type="STRING" id="359391.BAB1_0359"/>
<dbReference type="GeneID" id="93017206"/>
<dbReference type="KEGG" id="bmf:BAB1_0359"/>
<dbReference type="PATRIC" id="fig|359391.11.peg.2403"/>
<dbReference type="HOGENOM" id="CLU_047148_0_0_5"/>
<dbReference type="PhylomeDB" id="Q2YPI2"/>
<dbReference type="UniPathway" id="UPA00028">
    <property type="reaction ID" value="UER00005"/>
</dbReference>
<dbReference type="Proteomes" id="UP000002719">
    <property type="component" value="Chromosome I"/>
</dbReference>
<dbReference type="GO" id="GO:0005829">
    <property type="term" value="C:cytosol"/>
    <property type="evidence" value="ECO:0007669"/>
    <property type="project" value="TreeGrafter"/>
</dbReference>
<dbReference type="GO" id="GO:0005524">
    <property type="term" value="F:ATP binding"/>
    <property type="evidence" value="ECO:0007669"/>
    <property type="project" value="UniProtKB-KW"/>
</dbReference>
<dbReference type="GO" id="GO:0004592">
    <property type="term" value="F:pantoate-beta-alanine ligase activity"/>
    <property type="evidence" value="ECO:0007669"/>
    <property type="project" value="UniProtKB-UniRule"/>
</dbReference>
<dbReference type="GO" id="GO:0015940">
    <property type="term" value="P:pantothenate biosynthetic process"/>
    <property type="evidence" value="ECO:0007669"/>
    <property type="project" value="UniProtKB-UniRule"/>
</dbReference>
<dbReference type="CDD" id="cd00560">
    <property type="entry name" value="PanC"/>
    <property type="match status" value="1"/>
</dbReference>
<dbReference type="FunFam" id="3.40.50.620:FF:000013">
    <property type="entry name" value="Pantothenate synthetase"/>
    <property type="match status" value="1"/>
</dbReference>
<dbReference type="Gene3D" id="3.40.50.620">
    <property type="entry name" value="HUPs"/>
    <property type="match status" value="1"/>
</dbReference>
<dbReference type="Gene3D" id="3.30.1300.10">
    <property type="entry name" value="Pantoate-beta-alanine ligase, C-terminal domain"/>
    <property type="match status" value="1"/>
</dbReference>
<dbReference type="HAMAP" id="MF_00158">
    <property type="entry name" value="PanC"/>
    <property type="match status" value="1"/>
</dbReference>
<dbReference type="InterPro" id="IPR004821">
    <property type="entry name" value="Cyt_trans-like"/>
</dbReference>
<dbReference type="InterPro" id="IPR003721">
    <property type="entry name" value="Pantoate_ligase"/>
</dbReference>
<dbReference type="InterPro" id="IPR042176">
    <property type="entry name" value="Pantoate_ligase_C"/>
</dbReference>
<dbReference type="InterPro" id="IPR014729">
    <property type="entry name" value="Rossmann-like_a/b/a_fold"/>
</dbReference>
<dbReference type="NCBIfam" id="TIGR00125">
    <property type="entry name" value="cyt_tran_rel"/>
    <property type="match status" value="1"/>
</dbReference>
<dbReference type="NCBIfam" id="TIGR00018">
    <property type="entry name" value="panC"/>
    <property type="match status" value="1"/>
</dbReference>
<dbReference type="PANTHER" id="PTHR21299">
    <property type="entry name" value="CYTIDYLATE KINASE/PANTOATE-BETA-ALANINE LIGASE"/>
    <property type="match status" value="1"/>
</dbReference>
<dbReference type="PANTHER" id="PTHR21299:SF1">
    <property type="entry name" value="PANTOATE--BETA-ALANINE LIGASE"/>
    <property type="match status" value="1"/>
</dbReference>
<dbReference type="Pfam" id="PF02569">
    <property type="entry name" value="Pantoate_ligase"/>
    <property type="match status" value="1"/>
</dbReference>
<dbReference type="SUPFAM" id="SSF52374">
    <property type="entry name" value="Nucleotidylyl transferase"/>
    <property type="match status" value="1"/>
</dbReference>
<organism>
    <name type="scientific">Brucella abortus (strain 2308)</name>
    <dbReference type="NCBI Taxonomy" id="359391"/>
    <lineage>
        <taxon>Bacteria</taxon>
        <taxon>Pseudomonadati</taxon>
        <taxon>Pseudomonadota</taxon>
        <taxon>Alphaproteobacteria</taxon>
        <taxon>Hyphomicrobiales</taxon>
        <taxon>Brucellaceae</taxon>
        <taxon>Brucella/Ochrobactrum group</taxon>
        <taxon>Brucella</taxon>
    </lineage>
</organism>
<reference key="1">
    <citation type="journal article" date="2005" name="Infect. Immun.">
        <title>Whole-genome analyses of speciation events in pathogenic Brucellae.</title>
        <authorList>
            <person name="Chain P.S."/>
            <person name="Comerci D.J."/>
            <person name="Tolmasky M.E."/>
            <person name="Larimer F.W."/>
            <person name="Malfatti S.A."/>
            <person name="Vergez L.M."/>
            <person name="Aguero F."/>
            <person name="Land M.L."/>
            <person name="Ugalde R.A."/>
            <person name="Garcia E."/>
        </authorList>
    </citation>
    <scope>NUCLEOTIDE SEQUENCE [LARGE SCALE GENOMIC DNA]</scope>
    <source>
        <strain>2308</strain>
    </source>
</reference>
<comment type="function">
    <text evidence="1">Catalyzes the condensation of pantoate with beta-alanine in an ATP-dependent reaction via a pantoyl-adenylate intermediate.</text>
</comment>
<comment type="catalytic activity">
    <reaction evidence="1">
        <text>(R)-pantoate + beta-alanine + ATP = (R)-pantothenate + AMP + diphosphate + H(+)</text>
        <dbReference type="Rhea" id="RHEA:10912"/>
        <dbReference type="ChEBI" id="CHEBI:15378"/>
        <dbReference type="ChEBI" id="CHEBI:15980"/>
        <dbReference type="ChEBI" id="CHEBI:29032"/>
        <dbReference type="ChEBI" id="CHEBI:30616"/>
        <dbReference type="ChEBI" id="CHEBI:33019"/>
        <dbReference type="ChEBI" id="CHEBI:57966"/>
        <dbReference type="ChEBI" id="CHEBI:456215"/>
        <dbReference type="EC" id="6.3.2.1"/>
    </reaction>
</comment>
<comment type="pathway">
    <text evidence="1">Cofactor biosynthesis; (R)-pantothenate biosynthesis; (R)-pantothenate from (R)-pantoate and beta-alanine: step 1/1.</text>
</comment>
<comment type="subunit">
    <text evidence="1">Homodimer.</text>
</comment>
<comment type="subcellular location">
    <subcellularLocation>
        <location evidence="1">Cytoplasm</location>
    </subcellularLocation>
</comment>
<comment type="miscellaneous">
    <text evidence="1">The reaction proceeds by a bi uni uni bi ping pong mechanism.</text>
</comment>
<comment type="similarity">
    <text evidence="1">Belongs to the pantothenate synthetase family.</text>
</comment>
<feature type="chain" id="PRO_0000305411" description="Pantothenate synthetase">
    <location>
        <begin position="1"/>
        <end position="293"/>
    </location>
</feature>
<feature type="active site" description="Proton donor" evidence="1">
    <location>
        <position position="37"/>
    </location>
</feature>
<feature type="binding site" evidence="1">
    <location>
        <begin position="30"/>
        <end position="37"/>
    </location>
    <ligand>
        <name>ATP</name>
        <dbReference type="ChEBI" id="CHEBI:30616"/>
    </ligand>
</feature>
<feature type="binding site" evidence="1">
    <location>
        <position position="61"/>
    </location>
    <ligand>
        <name>(R)-pantoate</name>
        <dbReference type="ChEBI" id="CHEBI:15980"/>
    </ligand>
</feature>
<feature type="binding site" evidence="1">
    <location>
        <position position="61"/>
    </location>
    <ligand>
        <name>beta-alanine</name>
        <dbReference type="ChEBI" id="CHEBI:57966"/>
    </ligand>
</feature>
<feature type="binding site" evidence="1">
    <location>
        <begin position="147"/>
        <end position="150"/>
    </location>
    <ligand>
        <name>ATP</name>
        <dbReference type="ChEBI" id="CHEBI:30616"/>
    </ligand>
</feature>
<feature type="binding site" evidence="1">
    <location>
        <position position="153"/>
    </location>
    <ligand>
        <name>(R)-pantoate</name>
        <dbReference type="ChEBI" id="CHEBI:15980"/>
    </ligand>
</feature>
<feature type="binding site" evidence="1">
    <location>
        <position position="176"/>
    </location>
    <ligand>
        <name>ATP</name>
        <dbReference type="ChEBI" id="CHEBI:30616"/>
    </ligand>
</feature>
<feature type="binding site" evidence="1">
    <location>
        <begin position="184"/>
        <end position="187"/>
    </location>
    <ligand>
        <name>ATP</name>
        <dbReference type="ChEBI" id="CHEBI:30616"/>
    </ligand>
</feature>
<evidence type="ECO:0000255" key="1">
    <source>
        <dbReference type="HAMAP-Rule" id="MF_00158"/>
    </source>
</evidence>
<proteinExistence type="inferred from homology"/>
<keyword id="KW-0067">ATP-binding</keyword>
<keyword id="KW-0963">Cytoplasm</keyword>
<keyword id="KW-0436">Ligase</keyword>
<keyword id="KW-0547">Nucleotide-binding</keyword>
<keyword id="KW-0566">Pantothenate biosynthesis</keyword>
<keyword id="KW-1185">Reference proteome</keyword>